<sequence>MAKAANTAAQRARKKVRKNVADGIAHVHASFNNTIITITDRQGNALSWATSGGQGFKGSRKSTPFAAQVAAESAGRVAQDQGIKNLEVRIKGPGPGRESAVRALNNLGIKIQVIEDVTPVPHNGCRPPKRRRI</sequence>
<reference key="1">
    <citation type="journal article" date="2002" name="Nature">
        <title>Genome sequence of the plant pathogen Ralstonia solanacearum.</title>
        <authorList>
            <person name="Salanoubat M."/>
            <person name="Genin S."/>
            <person name="Artiguenave F."/>
            <person name="Gouzy J."/>
            <person name="Mangenot S."/>
            <person name="Arlat M."/>
            <person name="Billault A."/>
            <person name="Brottier P."/>
            <person name="Camus J.-C."/>
            <person name="Cattolico L."/>
            <person name="Chandler M."/>
            <person name="Choisne N."/>
            <person name="Claudel-Renard C."/>
            <person name="Cunnac S."/>
            <person name="Demange N."/>
            <person name="Gaspin C."/>
            <person name="Lavie M."/>
            <person name="Moisan A."/>
            <person name="Robert C."/>
            <person name="Saurin W."/>
            <person name="Schiex T."/>
            <person name="Siguier P."/>
            <person name="Thebault P."/>
            <person name="Whalen M."/>
            <person name="Wincker P."/>
            <person name="Levy M."/>
            <person name="Weissenbach J."/>
            <person name="Boucher C.A."/>
        </authorList>
    </citation>
    <scope>NUCLEOTIDE SEQUENCE [LARGE SCALE GENOMIC DNA]</scope>
    <source>
        <strain>ATCC BAA-1114 / GMI1000</strain>
    </source>
</reference>
<feature type="chain" id="PRO_0000123204" description="Small ribosomal subunit protein uS11">
    <location>
        <begin position="1"/>
        <end position="133"/>
    </location>
</feature>
<protein>
    <recommendedName>
        <fullName evidence="1">Small ribosomal subunit protein uS11</fullName>
    </recommendedName>
    <alternativeName>
        <fullName evidence="2">30S ribosomal protein S11</fullName>
    </alternativeName>
</protein>
<accession>Q8XV36</accession>
<name>RS11_RALN1</name>
<proteinExistence type="inferred from homology"/>
<gene>
    <name evidence="1" type="primary">rpsK</name>
    <name type="ordered locus">RSc2995</name>
    <name type="ORF">RS01118</name>
</gene>
<organism>
    <name type="scientific">Ralstonia nicotianae (strain ATCC BAA-1114 / GMI1000)</name>
    <name type="common">Ralstonia solanacearum</name>
    <dbReference type="NCBI Taxonomy" id="267608"/>
    <lineage>
        <taxon>Bacteria</taxon>
        <taxon>Pseudomonadati</taxon>
        <taxon>Pseudomonadota</taxon>
        <taxon>Betaproteobacteria</taxon>
        <taxon>Burkholderiales</taxon>
        <taxon>Burkholderiaceae</taxon>
        <taxon>Ralstonia</taxon>
        <taxon>Ralstonia solanacearum species complex</taxon>
    </lineage>
</organism>
<evidence type="ECO:0000255" key="1">
    <source>
        <dbReference type="HAMAP-Rule" id="MF_01310"/>
    </source>
</evidence>
<evidence type="ECO:0000305" key="2"/>
<keyword id="KW-1185">Reference proteome</keyword>
<keyword id="KW-0687">Ribonucleoprotein</keyword>
<keyword id="KW-0689">Ribosomal protein</keyword>
<keyword id="KW-0694">RNA-binding</keyword>
<keyword id="KW-0699">rRNA-binding</keyword>
<comment type="function">
    <text evidence="1">Located on the platform of the 30S subunit, it bridges several disparate RNA helices of the 16S rRNA. Forms part of the Shine-Dalgarno cleft in the 70S ribosome.</text>
</comment>
<comment type="subunit">
    <text evidence="1">Part of the 30S ribosomal subunit. Interacts with proteins S7 and S18. Binds to IF-3.</text>
</comment>
<comment type="similarity">
    <text evidence="1">Belongs to the universal ribosomal protein uS11 family.</text>
</comment>
<dbReference type="EMBL" id="AL646052">
    <property type="protein sequence ID" value="CAD16704.1"/>
    <property type="molecule type" value="Genomic_DNA"/>
</dbReference>
<dbReference type="RefSeq" id="WP_011002900.1">
    <property type="nucleotide sequence ID" value="NC_003295.1"/>
</dbReference>
<dbReference type="SMR" id="Q8XV36"/>
<dbReference type="STRING" id="267608.RSc2995"/>
<dbReference type="EnsemblBacteria" id="CAD16704">
    <property type="protein sequence ID" value="CAD16704"/>
    <property type="gene ID" value="RSc2995"/>
</dbReference>
<dbReference type="GeneID" id="34789859"/>
<dbReference type="KEGG" id="rso:RSc2995"/>
<dbReference type="eggNOG" id="COG0100">
    <property type="taxonomic scope" value="Bacteria"/>
</dbReference>
<dbReference type="HOGENOM" id="CLU_072439_5_0_4"/>
<dbReference type="Proteomes" id="UP000001436">
    <property type="component" value="Chromosome"/>
</dbReference>
<dbReference type="GO" id="GO:1990904">
    <property type="term" value="C:ribonucleoprotein complex"/>
    <property type="evidence" value="ECO:0007669"/>
    <property type="project" value="UniProtKB-KW"/>
</dbReference>
<dbReference type="GO" id="GO:0005840">
    <property type="term" value="C:ribosome"/>
    <property type="evidence" value="ECO:0007669"/>
    <property type="project" value="UniProtKB-KW"/>
</dbReference>
<dbReference type="GO" id="GO:0019843">
    <property type="term" value="F:rRNA binding"/>
    <property type="evidence" value="ECO:0007669"/>
    <property type="project" value="UniProtKB-UniRule"/>
</dbReference>
<dbReference type="GO" id="GO:0003735">
    <property type="term" value="F:structural constituent of ribosome"/>
    <property type="evidence" value="ECO:0007669"/>
    <property type="project" value="InterPro"/>
</dbReference>
<dbReference type="GO" id="GO:0006412">
    <property type="term" value="P:translation"/>
    <property type="evidence" value="ECO:0007669"/>
    <property type="project" value="UniProtKB-UniRule"/>
</dbReference>
<dbReference type="FunFam" id="3.30.420.80:FF:000001">
    <property type="entry name" value="30S ribosomal protein S11"/>
    <property type="match status" value="1"/>
</dbReference>
<dbReference type="Gene3D" id="3.30.420.80">
    <property type="entry name" value="Ribosomal protein S11"/>
    <property type="match status" value="1"/>
</dbReference>
<dbReference type="HAMAP" id="MF_01310">
    <property type="entry name" value="Ribosomal_uS11"/>
    <property type="match status" value="1"/>
</dbReference>
<dbReference type="InterPro" id="IPR001971">
    <property type="entry name" value="Ribosomal_uS11"/>
</dbReference>
<dbReference type="InterPro" id="IPR019981">
    <property type="entry name" value="Ribosomal_uS11_bac-type"/>
</dbReference>
<dbReference type="InterPro" id="IPR018102">
    <property type="entry name" value="Ribosomal_uS11_CS"/>
</dbReference>
<dbReference type="InterPro" id="IPR036967">
    <property type="entry name" value="Ribosomal_uS11_sf"/>
</dbReference>
<dbReference type="NCBIfam" id="NF003698">
    <property type="entry name" value="PRK05309.1"/>
    <property type="match status" value="1"/>
</dbReference>
<dbReference type="NCBIfam" id="TIGR03632">
    <property type="entry name" value="uS11_bact"/>
    <property type="match status" value="1"/>
</dbReference>
<dbReference type="PANTHER" id="PTHR11759">
    <property type="entry name" value="40S RIBOSOMAL PROTEIN S14/30S RIBOSOMAL PROTEIN S11"/>
    <property type="match status" value="1"/>
</dbReference>
<dbReference type="Pfam" id="PF00411">
    <property type="entry name" value="Ribosomal_S11"/>
    <property type="match status" value="1"/>
</dbReference>
<dbReference type="PIRSF" id="PIRSF002131">
    <property type="entry name" value="Ribosomal_S11"/>
    <property type="match status" value="1"/>
</dbReference>
<dbReference type="SUPFAM" id="SSF53137">
    <property type="entry name" value="Translational machinery components"/>
    <property type="match status" value="1"/>
</dbReference>
<dbReference type="PROSITE" id="PS00054">
    <property type="entry name" value="RIBOSOMAL_S11"/>
    <property type="match status" value="1"/>
</dbReference>